<name>CLD8_MOUSE</name>
<reference key="1">
    <citation type="journal article" date="1999" name="Proc. Natl. Acad. Sci. U.S.A.">
        <title>Claudin multigene family encoding four-transmembrane domain protein components of tight junction strands.</title>
        <authorList>
            <person name="Morita K."/>
            <person name="Furuse M."/>
            <person name="Fujimoto K."/>
            <person name="Tsukita S."/>
        </authorList>
    </citation>
    <scope>NUCLEOTIDE SEQUENCE [MRNA]</scope>
    <scope>SUBCELLULAR LOCATION</scope>
    <scope>TISSUE SPECIFICITY</scope>
</reference>
<reference key="2">
    <citation type="journal article" date="2004" name="Genome Res.">
        <title>The status, quality, and expansion of the NIH full-length cDNA project: the Mammalian Gene Collection (MGC).</title>
        <authorList>
            <consortium name="The MGC Project Team"/>
        </authorList>
    </citation>
    <scope>NUCLEOTIDE SEQUENCE [LARGE SCALE MRNA]</scope>
    <source>
        <tissue>Mammary tumor</tissue>
    </source>
</reference>
<reference key="3">
    <citation type="journal article" date="1999" name="J. Cell Biol.">
        <title>Direct binding of three tight junction-associated MAGUKs, ZO-1, ZO-2, and ZO-3, with the COOH termini of claudins.</title>
        <authorList>
            <person name="Itoh M."/>
            <person name="Furuse M."/>
            <person name="Morita K."/>
            <person name="Kubota K."/>
            <person name="Saitou M."/>
            <person name="Tsukita S."/>
        </authorList>
    </citation>
    <scope>INTERACTION WITH TJP1; TJP2 AND TJP3</scope>
</reference>
<reference key="4">
    <citation type="journal article" date="2010" name="Cell">
        <title>A tissue-specific atlas of mouse protein phosphorylation and expression.</title>
        <authorList>
            <person name="Huttlin E.L."/>
            <person name="Jedrychowski M.P."/>
            <person name="Elias J.E."/>
            <person name="Goswami T."/>
            <person name="Rad R."/>
            <person name="Beausoleil S.A."/>
            <person name="Villen J."/>
            <person name="Haas W."/>
            <person name="Sowa M.E."/>
            <person name="Gygi S.P."/>
        </authorList>
    </citation>
    <scope>IDENTIFICATION BY MASS SPECTROMETRY [LARGE SCALE ANALYSIS]</scope>
    <source>
        <tissue>Kidney</tissue>
        <tissue>Pancreas</tissue>
    </source>
</reference>
<reference key="5">
    <citation type="journal article" date="2010" name="Proc. Natl. Acad. Sci. U.S.A.">
        <title>Claudin-4 forms paracellular chloride channel in the kidney and requires claudin-8 for tight junction localization.</title>
        <authorList>
            <person name="Hou J."/>
            <person name="Renigunta A."/>
            <person name="Yang J."/>
            <person name="Waldegger S."/>
        </authorList>
    </citation>
    <scope>FUNCTION</scope>
    <scope>TRANSPORTER ACTIVITY</scope>
    <scope>SUBCELLULAR LOCATION</scope>
    <scope>INTERACTION WITH CLDN4</scope>
    <scope>TISSUE SPECIFICITY</scope>
</reference>
<reference key="6">
    <citation type="journal article" date="2015" name="Proc. Natl. Acad. Sci. U.S.A.">
        <title>KLHL3 regulates paracellular chloride transport in the kidney by ubiquitination of claudin-8.</title>
        <authorList>
            <person name="Gong Y."/>
            <person name="Wang J."/>
            <person name="Yang J."/>
            <person name="Gonzales E."/>
            <person name="Perez R."/>
            <person name="Hou J."/>
        </authorList>
    </citation>
    <scope>FUNCTION</scope>
    <scope>SUBCELLULAR LOCATION</scope>
    <scope>DISRUPTION PHENOTYPE</scope>
    <scope>INTERACTION WITH KLHL3</scope>
    <scope>UBIQUITINATION AT LYS-213</scope>
    <scope>MUTAGENESIS OF LYS-213</scope>
</reference>
<organism>
    <name type="scientific">Mus musculus</name>
    <name type="common">Mouse</name>
    <dbReference type="NCBI Taxonomy" id="10090"/>
    <lineage>
        <taxon>Eukaryota</taxon>
        <taxon>Metazoa</taxon>
        <taxon>Chordata</taxon>
        <taxon>Craniata</taxon>
        <taxon>Vertebrata</taxon>
        <taxon>Euteleostomi</taxon>
        <taxon>Mammalia</taxon>
        <taxon>Eutheria</taxon>
        <taxon>Euarchontoglires</taxon>
        <taxon>Glires</taxon>
        <taxon>Rodentia</taxon>
        <taxon>Myomorpha</taxon>
        <taxon>Muroidea</taxon>
        <taxon>Muridae</taxon>
        <taxon>Murinae</taxon>
        <taxon>Mus</taxon>
        <taxon>Mus</taxon>
    </lineage>
</organism>
<keyword id="KW-0965">Cell junction</keyword>
<keyword id="KW-1003">Cell membrane</keyword>
<keyword id="KW-1017">Isopeptide bond</keyword>
<keyword id="KW-0472">Membrane</keyword>
<keyword id="KW-1185">Reference proteome</keyword>
<keyword id="KW-0796">Tight junction</keyword>
<keyword id="KW-0812">Transmembrane</keyword>
<keyword id="KW-1133">Transmembrane helix</keyword>
<keyword id="KW-0832">Ubl conjugation</keyword>
<accession>Q9Z260</accession>
<proteinExistence type="evidence at protein level"/>
<comment type="function">
    <text evidence="1 4 5">Can associate with other claudins to regulate tight junction structural and functional strand dynamics (By similarity). May coassemble with CLDN4 into tight junction strands containing anion-selective channels that convey paracellular chloride permeability in renal collecting ducts (By similarity) (PubMed:20921420, PubMed:25831548). Cannot form tight junction strands on its own (By similarity).</text>
</comment>
<comment type="catalytic activity">
    <reaction evidence="10">
        <text>chloride(in) = chloride(out)</text>
        <dbReference type="Rhea" id="RHEA:29823"/>
        <dbReference type="ChEBI" id="CHEBI:17996"/>
    </reaction>
</comment>
<comment type="catalytic activity">
    <reaction evidence="10">
        <text>bromide(in) = bromide(out)</text>
        <dbReference type="Rhea" id="RHEA:75383"/>
        <dbReference type="ChEBI" id="CHEBI:15858"/>
    </reaction>
</comment>
<comment type="catalytic activity">
    <reaction evidence="10">
        <text>iodide(out) = iodide(in)</text>
        <dbReference type="Rhea" id="RHEA:66324"/>
        <dbReference type="ChEBI" id="CHEBI:16382"/>
    </reaction>
</comment>
<comment type="catalytic activity">
    <reaction evidence="10">
        <text>fluoride(in) = fluoride(out)</text>
        <dbReference type="Rhea" id="RHEA:76159"/>
        <dbReference type="ChEBI" id="CHEBI:17051"/>
    </reaction>
</comment>
<comment type="subunit">
    <text evidence="1 3 4 5">Can form heteropolymeric strands with other claudins (By similarity). Interacts with CLDN4 (PubMed:20921420). Directly interacts with TJP1/ZO-1, TJP2/ZO-2 and TJP3/ZO-3 (PubMed:10601346). Interacts with KLHL3 (PubMed:25831548).</text>
</comment>
<comment type="subcellular location">
    <subcellularLocation>
        <location evidence="4 5 6">Cell junction</location>
        <location evidence="4 5 6">Tight junction</location>
    </subcellularLocation>
    <subcellularLocation>
        <location evidence="4 6">Cell membrane</location>
        <topology evidence="2">Multi-pass membrane protein</topology>
    </subcellularLocation>
</comment>
<comment type="tissue specificity">
    <text evidence="4 6">Expressed primarily in lung and kidney (PubMed:9892664). Present in both cortical and medullar collecting ducts (at protein level) (PubMed:20921420).</text>
</comment>
<comment type="PTM">
    <text evidence="5">Ubiquitinated by the BCR(KLHL3) E3 ubiquitin ligase complex in the kidney, leading to its degradation.</text>
</comment>
<comment type="disruption phenotype">
    <text evidence="5">Conditional knockout mice lacking Cldn8 in the collecting duct of kidney show hypotension, hypokalemia, and metabolic alkalosis (PubMed:25831548).</text>
</comment>
<comment type="similarity">
    <text evidence="9">Belongs to the claudin family.</text>
</comment>
<gene>
    <name evidence="12" type="primary">Cldn8</name>
</gene>
<protein>
    <recommendedName>
        <fullName evidence="7 8">Claudin-8</fullName>
    </recommendedName>
</protein>
<feature type="chain" id="PRO_0000144754" description="Claudin-8">
    <location>
        <begin position="1"/>
        <end position="225"/>
    </location>
</feature>
<feature type="topological domain" description="Cytoplasmic" evidence="2">
    <location>
        <begin position="1"/>
        <end position="7"/>
    </location>
</feature>
<feature type="transmembrane region" description="Helical" evidence="2">
    <location>
        <begin position="8"/>
        <end position="28"/>
    </location>
</feature>
<feature type="topological domain" description="Extracellular" evidence="2">
    <location>
        <begin position="29"/>
        <end position="81"/>
    </location>
</feature>
<feature type="transmembrane region" description="Helical" evidence="2">
    <location>
        <begin position="82"/>
        <end position="102"/>
    </location>
</feature>
<feature type="topological domain" description="Cytoplasmic" evidence="2">
    <location>
        <begin position="103"/>
        <end position="117"/>
    </location>
</feature>
<feature type="transmembrane region" description="Helical" evidence="2">
    <location>
        <begin position="118"/>
        <end position="138"/>
    </location>
</feature>
<feature type="topological domain" description="Extracellular" evidence="2">
    <location>
        <begin position="139"/>
        <end position="166"/>
    </location>
</feature>
<feature type="transmembrane region" description="Helical" evidence="2">
    <location>
        <begin position="167"/>
        <end position="187"/>
    </location>
</feature>
<feature type="topological domain" description="Cytoplasmic" evidence="2">
    <location>
        <begin position="188"/>
        <end position="225"/>
    </location>
</feature>
<feature type="region of interest" description="Interactions with TJP1, TJP2 and TJP3" evidence="3">
    <location>
        <begin position="224"/>
        <end position="225"/>
    </location>
</feature>
<feature type="cross-link" description="Glycyl lysine isopeptide (Lys-Gly) (interchain with G-Cter in ubiquitin)" evidence="11">
    <location>
        <position position="213"/>
    </location>
</feature>
<feature type="mutagenesis site" description="Resistant to KLHL3-dependent protein degradation." evidence="5">
    <original>K</original>
    <variation>R</variation>
    <location>
        <position position="213"/>
    </location>
</feature>
<sequence length="225" mass="24947">MATYALQMAALVLGGVGMVGTVAVTIMPQWRVSAFIESNIVVFENRWEGLWMNCMRHANIRMQCKVYDSLLALSPDLQASRGLMCAASVLAFLAFMTAILGMKCTRCTGDDENVKSRILLTAGIIFFITGLVVLIPVSWVANSIIRDFYNPLVDVALKRELGEALYIGWTTALVLIAGGALFCCVFCCTERSNSYRYSVPSHRTTQRSFHAEKRSPSIYSKSQYV</sequence>
<evidence type="ECO:0000250" key="1">
    <source>
        <dbReference type="UniProtKB" id="P56748"/>
    </source>
</evidence>
<evidence type="ECO:0000255" key="2"/>
<evidence type="ECO:0000269" key="3">
    <source>
    </source>
</evidence>
<evidence type="ECO:0000269" key="4">
    <source>
    </source>
</evidence>
<evidence type="ECO:0000269" key="5">
    <source>
    </source>
</evidence>
<evidence type="ECO:0000269" key="6">
    <source>
    </source>
</evidence>
<evidence type="ECO:0000303" key="7">
    <source>
    </source>
</evidence>
<evidence type="ECO:0000303" key="8">
    <source>
    </source>
</evidence>
<evidence type="ECO:0000305" key="9"/>
<evidence type="ECO:0000305" key="10">
    <source>
    </source>
</evidence>
<evidence type="ECO:0000305" key="11">
    <source>
    </source>
</evidence>
<evidence type="ECO:0000312" key="12">
    <source>
        <dbReference type="MGI" id="MGI:1859286"/>
    </source>
</evidence>
<dbReference type="EMBL" id="AF087826">
    <property type="protein sequence ID" value="AAD09761.1"/>
    <property type="molecule type" value="mRNA"/>
</dbReference>
<dbReference type="EMBL" id="BC003868">
    <property type="protein sequence ID" value="AAH03868.1"/>
    <property type="molecule type" value="mRNA"/>
</dbReference>
<dbReference type="CCDS" id="CCDS28296.1"/>
<dbReference type="RefSeq" id="NP_061248.1">
    <property type="nucleotide sequence ID" value="NM_018778.3"/>
</dbReference>
<dbReference type="SMR" id="Q9Z260"/>
<dbReference type="FunCoup" id="Q9Z260">
    <property type="interactions" value="431"/>
</dbReference>
<dbReference type="MINT" id="Q9Z260"/>
<dbReference type="STRING" id="10090.ENSMUSP00000051887"/>
<dbReference type="iPTMnet" id="Q9Z260"/>
<dbReference type="PhosphoSitePlus" id="Q9Z260"/>
<dbReference type="PaxDb" id="10090-ENSMUSP00000051887"/>
<dbReference type="ProteomicsDB" id="285491"/>
<dbReference type="Antibodypedia" id="6589">
    <property type="antibodies" value="242 antibodies from 28 providers"/>
</dbReference>
<dbReference type="DNASU" id="54420"/>
<dbReference type="Ensembl" id="ENSMUST00000049697.5">
    <property type="protein sequence ID" value="ENSMUSP00000051887.5"/>
    <property type="gene ID" value="ENSMUSG00000050520.5"/>
</dbReference>
<dbReference type="GeneID" id="54420"/>
<dbReference type="KEGG" id="mmu:54420"/>
<dbReference type="UCSC" id="uc007zuz.2">
    <property type="organism name" value="mouse"/>
</dbReference>
<dbReference type="AGR" id="MGI:1859286"/>
<dbReference type="CTD" id="9073"/>
<dbReference type="MGI" id="MGI:1859286">
    <property type="gene designation" value="Cldn8"/>
</dbReference>
<dbReference type="VEuPathDB" id="HostDB:ENSMUSG00000050520"/>
<dbReference type="eggNOG" id="ENOG502RTNJ">
    <property type="taxonomic scope" value="Eukaryota"/>
</dbReference>
<dbReference type="GeneTree" id="ENSGT00940000159077"/>
<dbReference type="HOGENOM" id="CLU_076370_1_2_1"/>
<dbReference type="InParanoid" id="Q9Z260"/>
<dbReference type="OMA" id="CFVAHNI"/>
<dbReference type="OrthoDB" id="8819159at2759"/>
<dbReference type="PhylomeDB" id="Q9Z260"/>
<dbReference type="TreeFam" id="TF331936"/>
<dbReference type="BioGRID-ORCS" id="54420">
    <property type="hits" value="1 hit in 77 CRISPR screens"/>
</dbReference>
<dbReference type="ChiTaRS" id="Cldn8">
    <property type="organism name" value="mouse"/>
</dbReference>
<dbReference type="PRO" id="PR:Q9Z260"/>
<dbReference type="Proteomes" id="UP000000589">
    <property type="component" value="Chromosome 16"/>
</dbReference>
<dbReference type="RNAct" id="Q9Z260">
    <property type="molecule type" value="protein"/>
</dbReference>
<dbReference type="Bgee" id="ENSMUSG00000050520">
    <property type="expression patterns" value="Expressed in seminal vesicle and 133 other cell types or tissues"/>
</dbReference>
<dbReference type="ExpressionAtlas" id="Q9Z260">
    <property type="expression patterns" value="baseline and differential"/>
</dbReference>
<dbReference type="GO" id="GO:0016327">
    <property type="term" value="C:apicolateral plasma membrane"/>
    <property type="evidence" value="ECO:0000314"/>
    <property type="project" value="UniProtKB"/>
</dbReference>
<dbReference type="GO" id="GO:0016323">
    <property type="term" value="C:basolateral plasma membrane"/>
    <property type="evidence" value="ECO:0000314"/>
    <property type="project" value="MGI"/>
</dbReference>
<dbReference type="GO" id="GO:0005923">
    <property type="term" value="C:bicellular tight junction"/>
    <property type="evidence" value="ECO:0000314"/>
    <property type="project" value="UniProtKB"/>
</dbReference>
<dbReference type="GO" id="GO:0016020">
    <property type="term" value="C:membrane"/>
    <property type="evidence" value="ECO:0000303"/>
    <property type="project" value="UniProtKB"/>
</dbReference>
<dbReference type="GO" id="GO:0042802">
    <property type="term" value="F:identical protein binding"/>
    <property type="evidence" value="ECO:0000250"/>
    <property type="project" value="UniProtKB"/>
</dbReference>
<dbReference type="GO" id="GO:0005198">
    <property type="term" value="F:structural molecule activity"/>
    <property type="evidence" value="ECO:0007669"/>
    <property type="project" value="InterPro"/>
</dbReference>
<dbReference type="GO" id="GO:0016338">
    <property type="term" value="P:calcium-independent cell-cell adhesion via plasma membrane cell-adhesion molecules"/>
    <property type="evidence" value="ECO:0000250"/>
    <property type="project" value="UniProtKB"/>
</dbReference>
<dbReference type="FunFam" id="1.20.140.150:FF:000001">
    <property type="entry name" value="Claudin"/>
    <property type="match status" value="1"/>
</dbReference>
<dbReference type="Gene3D" id="1.20.140.150">
    <property type="match status" value="1"/>
</dbReference>
<dbReference type="InterPro" id="IPR006187">
    <property type="entry name" value="Claudin"/>
</dbReference>
<dbReference type="InterPro" id="IPR017974">
    <property type="entry name" value="Claudin_CS"/>
</dbReference>
<dbReference type="InterPro" id="IPR004031">
    <property type="entry name" value="PMP22/EMP/MP20/Claudin"/>
</dbReference>
<dbReference type="PANTHER" id="PTHR12002">
    <property type="entry name" value="CLAUDIN"/>
    <property type="match status" value="1"/>
</dbReference>
<dbReference type="Pfam" id="PF00822">
    <property type="entry name" value="PMP22_Claudin"/>
    <property type="match status" value="1"/>
</dbReference>
<dbReference type="PRINTS" id="PR01077">
    <property type="entry name" value="CLAUDIN"/>
</dbReference>
<dbReference type="PRINTS" id="PR01446">
    <property type="entry name" value="CLAUDIN8"/>
</dbReference>
<dbReference type="PROSITE" id="PS01346">
    <property type="entry name" value="CLAUDIN"/>
    <property type="match status" value="1"/>
</dbReference>